<reference key="1">
    <citation type="journal article" date="2002" name="DNA Res.">
        <title>Complete genomic sequence of nitrogen-fixing symbiotic bacterium Bradyrhizobium japonicum USDA110.</title>
        <authorList>
            <person name="Kaneko T."/>
            <person name="Nakamura Y."/>
            <person name="Sato S."/>
            <person name="Minamisawa K."/>
            <person name="Uchiumi T."/>
            <person name="Sasamoto S."/>
            <person name="Watanabe A."/>
            <person name="Idesawa K."/>
            <person name="Iriguchi M."/>
            <person name="Kawashima K."/>
            <person name="Kohara M."/>
            <person name="Matsumoto M."/>
            <person name="Shimpo S."/>
            <person name="Tsuruoka H."/>
            <person name="Wada T."/>
            <person name="Yamada M."/>
            <person name="Tabata S."/>
        </authorList>
    </citation>
    <scope>NUCLEOTIDE SEQUENCE [LARGE SCALE GENOMIC DNA]</scope>
    <source>
        <strain>JCM 10833 / BCRC 13528 / IAM 13628 / NBRC 14792 / USDA 110</strain>
    </source>
</reference>
<sequence>MKFTLSWLKDHLETDEPLDRLAEKLTMIGLEVENIEDKAKALKPFTIARVISAEQHPNADRLRVCMVDTGDGGAPVQVVCGAPNARAGLVSVFSAPGTYIPGKDITLGVGTIRGVESRGMLCSAAELQISNDHDGIMELPADAPIGAAYAEWAALGDPVVEINLTPNRQDCTGVHGIARDLAAADMGKFKDPTIKPVKGEFPCPVKVTVEDATLCPGFALRLVRGVKNGPSPEWLQKRLTAIGLRPINALVDITNFMTYDRARPLHVFDARKVKGNLVVRRARDGETLLALDGRTYNLDPATCVIADEHGVESLAGIMGGEASGCDENTTDVLIESALWNEINIAQTGRKLGINSDARYRFERGVDPAFMVPGLELATKLVMEMCGGAPSENVVVGKAFGDDRVIDFPVTEVKRLSGIEVPQPEMKRILTHLGFMMAGPGPVVKVAVPSWRTDVHGKADIVEEIVRIYGVDKVPMTPFERGDDARKPVLTPLQLRTRRARRALASRGIIEAVTWSFITKSAAKLFGGGQRELEVANPIASDLSDMRPTLLAGLIAAAQANADRGFGDVALFEVGQVFKGDRPQDQFMAASGVRRGFASSEGLGRHWSGSVQADLFDAKADALAVLAAAGAPMQALQIVAGGPGWLHPGRSGTIQIGPQNVLGYFGEMHPRALEALGADGPLMVFEVILDRVPEAKKRPTRAKPLIELSAFQPVSRDFAFIVDRTVKAGDIVRAAQGVDKKLITGVNVFDVYEGKGIDDGKKSIAIAVTIQPREKTLTDQEIEAVAAKVVAEVTKKTGGTLRA</sequence>
<protein>
    <recommendedName>
        <fullName evidence="1">Phenylalanine--tRNA ligase beta subunit</fullName>
        <ecNumber evidence="1">6.1.1.20</ecNumber>
    </recommendedName>
    <alternativeName>
        <fullName evidence="1">Phenylalanyl-tRNA synthetase beta subunit</fullName>
        <shortName evidence="1">PheRS</shortName>
    </alternativeName>
</protein>
<name>SYFB_BRADU</name>
<evidence type="ECO:0000255" key="1">
    <source>
        <dbReference type="HAMAP-Rule" id="MF_00283"/>
    </source>
</evidence>
<dbReference type="EC" id="6.1.1.20" evidence="1"/>
<dbReference type="EMBL" id="BA000040">
    <property type="protein sequence ID" value="BAC45970.1"/>
    <property type="molecule type" value="Genomic_DNA"/>
</dbReference>
<dbReference type="RefSeq" id="NP_767345.1">
    <property type="nucleotide sequence ID" value="NC_004463.1"/>
</dbReference>
<dbReference type="RefSeq" id="WP_011083531.1">
    <property type="nucleotide sequence ID" value="NC_004463.1"/>
</dbReference>
<dbReference type="SMR" id="Q89WI2"/>
<dbReference type="FunCoup" id="Q89WI2">
    <property type="interactions" value="587"/>
</dbReference>
<dbReference type="STRING" id="224911.AAV28_00360"/>
<dbReference type="EnsemblBacteria" id="BAC45970">
    <property type="protein sequence ID" value="BAC45970"/>
    <property type="gene ID" value="BAC45970"/>
</dbReference>
<dbReference type="GeneID" id="46487978"/>
<dbReference type="KEGG" id="bja:bll0705"/>
<dbReference type="PATRIC" id="fig|224911.44.peg.75"/>
<dbReference type="eggNOG" id="COG0072">
    <property type="taxonomic scope" value="Bacteria"/>
</dbReference>
<dbReference type="eggNOG" id="COG0073">
    <property type="taxonomic scope" value="Bacteria"/>
</dbReference>
<dbReference type="HOGENOM" id="CLU_016891_0_0_5"/>
<dbReference type="InParanoid" id="Q89WI2"/>
<dbReference type="OrthoDB" id="9805455at2"/>
<dbReference type="PhylomeDB" id="Q89WI2"/>
<dbReference type="Proteomes" id="UP000002526">
    <property type="component" value="Chromosome"/>
</dbReference>
<dbReference type="GO" id="GO:0009328">
    <property type="term" value="C:phenylalanine-tRNA ligase complex"/>
    <property type="evidence" value="ECO:0000318"/>
    <property type="project" value="GO_Central"/>
</dbReference>
<dbReference type="GO" id="GO:0005524">
    <property type="term" value="F:ATP binding"/>
    <property type="evidence" value="ECO:0007669"/>
    <property type="project" value="UniProtKB-UniRule"/>
</dbReference>
<dbReference type="GO" id="GO:0000287">
    <property type="term" value="F:magnesium ion binding"/>
    <property type="evidence" value="ECO:0007669"/>
    <property type="project" value="UniProtKB-UniRule"/>
</dbReference>
<dbReference type="GO" id="GO:0004826">
    <property type="term" value="F:phenylalanine-tRNA ligase activity"/>
    <property type="evidence" value="ECO:0007669"/>
    <property type="project" value="UniProtKB-UniRule"/>
</dbReference>
<dbReference type="GO" id="GO:0000049">
    <property type="term" value="F:tRNA binding"/>
    <property type="evidence" value="ECO:0007669"/>
    <property type="project" value="UniProtKB-KW"/>
</dbReference>
<dbReference type="GO" id="GO:0006432">
    <property type="term" value="P:phenylalanyl-tRNA aminoacylation"/>
    <property type="evidence" value="ECO:0000318"/>
    <property type="project" value="GO_Central"/>
</dbReference>
<dbReference type="CDD" id="cd00769">
    <property type="entry name" value="PheRS_beta_core"/>
    <property type="match status" value="1"/>
</dbReference>
<dbReference type="CDD" id="cd02796">
    <property type="entry name" value="tRNA_bind_bactPheRS"/>
    <property type="match status" value="1"/>
</dbReference>
<dbReference type="FunFam" id="2.40.50.140:FF:000045">
    <property type="entry name" value="Phenylalanine--tRNA ligase beta subunit"/>
    <property type="match status" value="1"/>
</dbReference>
<dbReference type="FunFam" id="3.30.70.380:FF:000001">
    <property type="entry name" value="Phenylalanine--tRNA ligase beta subunit"/>
    <property type="match status" value="1"/>
</dbReference>
<dbReference type="FunFam" id="3.50.40.10:FF:000001">
    <property type="entry name" value="Phenylalanine--tRNA ligase beta subunit"/>
    <property type="match status" value="1"/>
</dbReference>
<dbReference type="Gene3D" id="3.30.56.10">
    <property type="match status" value="2"/>
</dbReference>
<dbReference type="Gene3D" id="3.30.930.10">
    <property type="entry name" value="Bira Bifunctional Protein, Domain 2"/>
    <property type="match status" value="1"/>
</dbReference>
<dbReference type="Gene3D" id="3.30.70.380">
    <property type="entry name" value="Ferrodoxin-fold anticodon-binding domain"/>
    <property type="match status" value="1"/>
</dbReference>
<dbReference type="Gene3D" id="2.40.50.140">
    <property type="entry name" value="Nucleic acid-binding proteins"/>
    <property type="match status" value="1"/>
</dbReference>
<dbReference type="Gene3D" id="3.50.40.10">
    <property type="entry name" value="Phenylalanyl-trna Synthetase, Chain B, domain 3"/>
    <property type="match status" value="1"/>
</dbReference>
<dbReference type="HAMAP" id="MF_00283">
    <property type="entry name" value="Phe_tRNA_synth_beta1"/>
    <property type="match status" value="1"/>
</dbReference>
<dbReference type="InterPro" id="IPR045864">
    <property type="entry name" value="aa-tRNA-synth_II/BPL/LPL"/>
</dbReference>
<dbReference type="InterPro" id="IPR005146">
    <property type="entry name" value="B3/B4_tRNA-bd"/>
</dbReference>
<dbReference type="InterPro" id="IPR009061">
    <property type="entry name" value="DNA-bd_dom_put_sf"/>
</dbReference>
<dbReference type="InterPro" id="IPR005121">
    <property type="entry name" value="Fdx_antiC-bd"/>
</dbReference>
<dbReference type="InterPro" id="IPR036690">
    <property type="entry name" value="Fdx_antiC-bd_sf"/>
</dbReference>
<dbReference type="InterPro" id="IPR012340">
    <property type="entry name" value="NA-bd_OB-fold"/>
</dbReference>
<dbReference type="InterPro" id="IPR045060">
    <property type="entry name" value="Phe-tRNA-ligase_IIc_bsu"/>
</dbReference>
<dbReference type="InterPro" id="IPR004532">
    <property type="entry name" value="Phe-tRNA-ligase_IIc_bsu_bact"/>
</dbReference>
<dbReference type="InterPro" id="IPR020825">
    <property type="entry name" value="Phe-tRNA_synthase-like_B3/B4"/>
</dbReference>
<dbReference type="InterPro" id="IPR041616">
    <property type="entry name" value="PheRS_beta_core"/>
</dbReference>
<dbReference type="InterPro" id="IPR002547">
    <property type="entry name" value="tRNA-bd_dom"/>
</dbReference>
<dbReference type="InterPro" id="IPR033714">
    <property type="entry name" value="tRNA_bind_bactPheRS"/>
</dbReference>
<dbReference type="InterPro" id="IPR005147">
    <property type="entry name" value="tRNA_synthase_B5-dom"/>
</dbReference>
<dbReference type="NCBIfam" id="TIGR00472">
    <property type="entry name" value="pheT_bact"/>
    <property type="match status" value="1"/>
</dbReference>
<dbReference type="NCBIfam" id="NF045760">
    <property type="entry name" value="YtpR"/>
    <property type="match status" value="1"/>
</dbReference>
<dbReference type="PANTHER" id="PTHR10947:SF0">
    <property type="entry name" value="PHENYLALANINE--TRNA LIGASE BETA SUBUNIT"/>
    <property type="match status" value="1"/>
</dbReference>
<dbReference type="PANTHER" id="PTHR10947">
    <property type="entry name" value="PHENYLALANYL-TRNA SYNTHETASE BETA CHAIN AND LEUCINE-RICH REPEAT-CONTAINING PROTEIN 47"/>
    <property type="match status" value="1"/>
</dbReference>
<dbReference type="Pfam" id="PF03483">
    <property type="entry name" value="B3_4"/>
    <property type="match status" value="1"/>
</dbReference>
<dbReference type="Pfam" id="PF03484">
    <property type="entry name" value="B5"/>
    <property type="match status" value="1"/>
</dbReference>
<dbReference type="Pfam" id="PF03147">
    <property type="entry name" value="FDX-ACB"/>
    <property type="match status" value="1"/>
</dbReference>
<dbReference type="Pfam" id="PF01588">
    <property type="entry name" value="tRNA_bind"/>
    <property type="match status" value="1"/>
</dbReference>
<dbReference type="Pfam" id="PF17759">
    <property type="entry name" value="tRNA_synthFbeta"/>
    <property type="match status" value="1"/>
</dbReference>
<dbReference type="SMART" id="SM00873">
    <property type="entry name" value="B3_4"/>
    <property type="match status" value="1"/>
</dbReference>
<dbReference type="SMART" id="SM00874">
    <property type="entry name" value="B5"/>
    <property type="match status" value="1"/>
</dbReference>
<dbReference type="SMART" id="SM00896">
    <property type="entry name" value="FDX-ACB"/>
    <property type="match status" value="1"/>
</dbReference>
<dbReference type="SUPFAM" id="SSF54991">
    <property type="entry name" value="Anticodon-binding domain of PheRS"/>
    <property type="match status" value="1"/>
</dbReference>
<dbReference type="SUPFAM" id="SSF55681">
    <property type="entry name" value="Class II aaRS and biotin synthetases"/>
    <property type="match status" value="1"/>
</dbReference>
<dbReference type="SUPFAM" id="SSF50249">
    <property type="entry name" value="Nucleic acid-binding proteins"/>
    <property type="match status" value="1"/>
</dbReference>
<dbReference type="SUPFAM" id="SSF56037">
    <property type="entry name" value="PheT/TilS domain"/>
    <property type="match status" value="1"/>
</dbReference>
<dbReference type="SUPFAM" id="SSF46955">
    <property type="entry name" value="Putative DNA-binding domain"/>
    <property type="match status" value="1"/>
</dbReference>
<dbReference type="PROSITE" id="PS51483">
    <property type="entry name" value="B5"/>
    <property type="match status" value="1"/>
</dbReference>
<dbReference type="PROSITE" id="PS51447">
    <property type="entry name" value="FDX_ACB"/>
    <property type="match status" value="1"/>
</dbReference>
<dbReference type="PROSITE" id="PS50886">
    <property type="entry name" value="TRBD"/>
    <property type="match status" value="1"/>
</dbReference>
<feature type="chain" id="PRO_0000126853" description="Phenylalanine--tRNA ligase beta subunit">
    <location>
        <begin position="1"/>
        <end position="802"/>
    </location>
</feature>
<feature type="domain" description="tRNA-binding" evidence="1">
    <location>
        <begin position="39"/>
        <end position="150"/>
    </location>
</feature>
<feature type="domain" description="B5" evidence="1">
    <location>
        <begin position="400"/>
        <end position="475"/>
    </location>
</feature>
<feature type="domain" description="FDX-ACB" evidence="1">
    <location>
        <begin position="708"/>
        <end position="801"/>
    </location>
</feature>
<feature type="binding site" evidence="1">
    <location>
        <position position="453"/>
    </location>
    <ligand>
        <name>Mg(2+)</name>
        <dbReference type="ChEBI" id="CHEBI:18420"/>
        <note>shared with alpha subunit</note>
    </ligand>
</feature>
<feature type="binding site" evidence="1">
    <location>
        <position position="459"/>
    </location>
    <ligand>
        <name>Mg(2+)</name>
        <dbReference type="ChEBI" id="CHEBI:18420"/>
        <note>shared with alpha subunit</note>
    </ligand>
</feature>
<feature type="binding site" evidence="1">
    <location>
        <position position="462"/>
    </location>
    <ligand>
        <name>Mg(2+)</name>
        <dbReference type="ChEBI" id="CHEBI:18420"/>
        <note>shared with alpha subunit</note>
    </ligand>
</feature>
<feature type="binding site" evidence="1">
    <location>
        <position position="463"/>
    </location>
    <ligand>
        <name>Mg(2+)</name>
        <dbReference type="ChEBI" id="CHEBI:18420"/>
        <note>shared with alpha subunit</note>
    </ligand>
</feature>
<proteinExistence type="inferred from homology"/>
<gene>
    <name evidence="1" type="primary">pheT</name>
    <name type="ordered locus">bll0705</name>
</gene>
<keyword id="KW-0030">Aminoacyl-tRNA synthetase</keyword>
<keyword id="KW-0067">ATP-binding</keyword>
<keyword id="KW-0963">Cytoplasm</keyword>
<keyword id="KW-0436">Ligase</keyword>
<keyword id="KW-0460">Magnesium</keyword>
<keyword id="KW-0479">Metal-binding</keyword>
<keyword id="KW-0547">Nucleotide-binding</keyword>
<keyword id="KW-0648">Protein biosynthesis</keyword>
<keyword id="KW-1185">Reference proteome</keyword>
<keyword id="KW-0694">RNA-binding</keyword>
<keyword id="KW-0820">tRNA-binding</keyword>
<organism>
    <name type="scientific">Bradyrhizobium diazoefficiens (strain JCM 10833 / BCRC 13528 / IAM 13628 / NBRC 14792 / USDA 110)</name>
    <dbReference type="NCBI Taxonomy" id="224911"/>
    <lineage>
        <taxon>Bacteria</taxon>
        <taxon>Pseudomonadati</taxon>
        <taxon>Pseudomonadota</taxon>
        <taxon>Alphaproteobacteria</taxon>
        <taxon>Hyphomicrobiales</taxon>
        <taxon>Nitrobacteraceae</taxon>
        <taxon>Bradyrhizobium</taxon>
    </lineage>
</organism>
<accession>Q89WI2</accession>
<comment type="catalytic activity">
    <reaction evidence="1">
        <text>tRNA(Phe) + L-phenylalanine + ATP = L-phenylalanyl-tRNA(Phe) + AMP + diphosphate + H(+)</text>
        <dbReference type="Rhea" id="RHEA:19413"/>
        <dbReference type="Rhea" id="RHEA-COMP:9668"/>
        <dbReference type="Rhea" id="RHEA-COMP:9699"/>
        <dbReference type="ChEBI" id="CHEBI:15378"/>
        <dbReference type="ChEBI" id="CHEBI:30616"/>
        <dbReference type="ChEBI" id="CHEBI:33019"/>
        <dbReference type="ChEBI" id="CHEBI:58095"/>
        <dbReference type="ChEBI" id="CHEBI:78442"/>
        <dbReference type="ChEBI" id="CHEBI:78531"/>
        <dbReference type="ChEBI" id="CHEBI:456215"/>
        <dbReference type="EC" id="6.1.1.20"/>
    </reaction>
</comment>
<comment type="cofactor">
    <cofactor evidence="1">
        <name>Mg(2+)</name>
        <dbReference type="ChEBI" id="CHEBI:18420"/>
    </cofactor>
    <text evidence="1">Binds 2 magnesium ions per tetramer.</text>
</comment>
<comment type="subunit">
    <text evidence="1">Tetramer of two alpha and two beta subunits.</text>
</comment>
<comment type="subcellular location">
    <subcellularLocation>
        <location evidence="1">Cytoplasm</location>
    </subcellularLocation>
</comment>
<comment type="similarity">
    <text evidence="1">Belongs to the phenylalanyl-tRNA synthetase beta subunit family. Type 1 subfamily.</text>
</comment>